<dbReference type="EMBL" id="CP000238">
    <property type="protein sequence ID" value="ABF14298.1"/>
    <property type="molecule type" value="Genomic_DNA"/>
</dbReference>
<dbReference type="RefSeq" id="WP_011520243.1">
    <property type="nucleotide sequence ID" value="NC_007984.1"/>
</dbReference>
<dbReference type="SMR" id="Q1LU54"/>
<dbReference type="STRING" id="374463.BCI_0031"/>
<dbReference type="KEGG" id="bci:BCI_0031"/>
<dbReference type="HOGENOM" id="CLU_082184_2_2_6"/>
<dbReference type="OrthoDB" id="9801330at2"/>
<dbReference type="Proteomes" id="UP000002427">
    <property type="component" value="Chromosome"/>
</dbReference>
<dbReference type="GO" id="GO:0022625">
    <property type="term" value="C:cytosolic large ribosomal subunit"/>
    <property type="evidence" value="ECO:0007669"/>
    <property type="project" value="TreeGrafter"/>
</dbReference>
<dbReference type="GO" id="GO:0003729">
    <property type="term" value="F:mRNA binding"/>
    <property type="evidence" value="ECO:0007669"/>
    <property type="project" value="TreeGrafter"/>
</dbReference>
<dbReference type="GO" id="GO:0003735">
    <property type="term" value="F:structural constituent of ribosome"/>
    <property type="evidence" value="ECO:0007669"/>
    <property type="project" value="InterPro"/>
</dbReference>
<dbReference type="GO" id="GO:0017148">
    <property type="term" value="P:negative regulation of translation"/>
    <property type="evidence" value="ECO:0007669"/>
    <property type="project" value="TreeGrafter"/>
</dbReference>
<dbReference type="GO" id="GO:0006412">
    <property type="term" value="P:translation"/>
    <property type="evidence" value="ECO:0007669"/>
    <property type="project" value="UniProtKB-UniRule"/>
</dbReference>
<dbReference type="CDD" id="cd00392">
    <property type="entry name" value="Ribosomal_L13"/>
    <property type="match status" value="1"/>
</dbReference>
<dbReference type="FunFam" id="3.90.1180.10:FF:000001">
    <property type="entry name" value="50S ribosomal protein L13"/>
    <property type="match status" value="1"/>
</dbReference>
<dbReference type="Gene3D" id="3.90.1180.10">
    <property type="entry name" value="Ribosomal protein L13"/>
    <property type="match status" value="1"/>
</dbReference>
<dbReference type="HAMAP" id="MF_01366">
    <property type="entry name" value="Ribosomal_uL13"/>
    <property type="match status" value="1"/>
</dbReference>
<dbReference type="InterPro" id="IPR005822">
    <property type="entry name" value="Ribosomal_uL13"/>
</dbReference>
<dbReference type="InterPro" id="IPR005823">
    <property type="entry name" value="Ribosomal_uL13_bac-type"/>
</dbReference>
<dbReference type="InterPro" id="IPR023563">
    <property type="entry name" value="Ribosomal_uL13_CS"/>
</dbReference>
<dbReference type="InterPro" id="IPR036899">
    <property type="entry name" value="Ribosomal_uL13_sf"/>
</dbReference>
<dbReference type="NCBIfam" id="TIGR01066">
    <property type="entry name" value="rplM_bact"/>
    <property type="match status" value="1"/>
</dbReference>
<dbReference type="PANTHER" id="PTHR11545:SF2">
    <property type="entry name" value="LARGE RIBOSOMAL SUBUNIT PROTEIN UL13M"/>
    <property type="match status" value="1"/>
</dbReference>
<dbReference type="PANTHER" id="PTHR11545">
    <property type="entry name" value="RIBOSOMAL PROTEIN L13"/>
    <property type="match status" value="1"/>
</dbReference>
<dbReference type="Pfam" id="PF00572">
    <property type="entry name" value="Ribosomal_L13"/>
    <property type="match status" value="1"/>
</dbReference>
<dbReference type="PIRSF" id="PIRSF002181">
    <property type="entry name" value="Ribosomal_L13"/>
    <property type="match status" value="1"/>
</dbReference>
<dbReference type="SUPFAM" id="SSF52161">
    <property type="entry name" value="Ribosomal protein L13"/>
    <property type="match status" value="1"/>
</dbReference>
<dbReference type="PROSITE" id="PS00783">
    <property type="entry name" value="RIBOSOMAL_L13"/>
    <property type="match status" value="1"/>
</dbReference>
<comment type="function">
    <text evidence="1">This protein is one of the early assembly proteins of the 50S ribosomal subunit, although it is not seen to bind rRNA by itself. It is important during the early stages of 50S assembly.</text>
</comment>
<comment type="subunit">
    <text evidence="1">Part of the 50S ribosomal subunit.</text>
</comment>
<comment type="similarity">
    <text evidence="1">Belongs to the universal ribosomal protein uL13 family.</text>
</comment>
<name>RL13_BAUCH</name>
<organism>
    <name type="scientific">Baumannia cicadellinicola subsp. Homalodisca coagulata</name>
    <dbReference type="NCBI Taxonomy" id="374463"/>
    <lineage>
        <taxon>Bacteria</taxon>
        <taxon>Pseudomonadati</taxon>
        <taxon>Pseudomonadota</taxon>
        <taxon>Gammaproteobacteria</taxon>
        <taxon>Candidatus Palibaumannia</taxon>
    </lineage>
</organism>
<protein>
    <recommendedName>
        <fullName evidence="1">Large ribosomal subunit protein uL13</fullName>
    </recommendedName>
    <alternativeName>
        <fullName evidence="2">50S ribosomal protein L13</fullName>
    </alternativeName>
</protein>
<keyword id="KW-1185">Reference proteome</keyword>
<keyword id="KW-0687">Ribonucleoprotein</keyword>
<keyword id="KW-0689">Ribosomal protein</keyword>
<gene>
    <name evidence="1" type="primary">rplM</name>
    <name type="ordered locus">BCI_0031</name>
</gene>
<reference key="1">
    <citation type="journal article" date="2006" name="PLoS Biol.">
        <title>Metabolic complementarity and genomics of the dual bacterial symbiosis of sharpshooters.</title>
        <authorList>
            <person name="Wu D."/>
            <person name="Daugherty S.C."/>
            <person name="Van Aken S.E."/>
            <person name="Pai G.H."/>
            <person name="Watkins K.L."/>
            <person name="Khouri H."/>
            <person name="Tallon L.J."/>
            <person name="Zaborsky J.M."/>
            <person name="Dunbar H.E."/>
            <person name="Tran P.L."/>
            <person name="Moran N.A."/>
            <person name="Eisen J.A."/>
        </authorList>
    </citation>
    <scope>NUCLEOTIDE SEQUENCE [LARGE SCALE GENOMIC DNA]</scope>
</reference>
<sequence length="142" mass="16202">MKTFTAKLENIRRNWYIMDASNKILGRFASNIALRLRGKHKVIYTPHIDTGDYIIVLNAKKITVTGNKLSDKKYYHYTGFVGGIKEQNLKDLMTKRPEYVIERAVKGMLPKGALGKAMLKKLKVYAGTEHQHAAQQPQVLEI</sequence>
<evidence type="ECO:0000255" key="1">
    <source>
        <dbReference type="HAMAP-Rule" id="MF_01366"/>
    </source>
</evidence>
<evidence type="ECO:0000305" key="2"/>
<proteinExistence type="inferred from homology"/>
<feature type="chain" id="PRO_0000261690" description="Large ribosomal subunit protein uL13">
    <location>
        <begin position="1"/>
        <end position="142"/>
    </location>
</feature>
<accession>Q1LU54</accession>